<name>RS20_LACPL</name>
<dbReference type="EMBL" id="AL935263">
    <property type="protein sequence ID" value="CCC79360.1"/>
    <property type="molecule type" value="Genomic_DNA"/>
</dbReference>
<dbReference type="RefSeq" id="WP_003645660.1">
    <property type="nucleotide sequence ID" value="NC_004567.2"/>
</dbReference>
<dbReference type="RefSeq" id="YP_004889874.1">
    <property type="nucleotide sequence ID" value="NC_004567.2"/>
</dbReference>
<dbReference type="SMR" id="Q88VD4"/>
<dbReference type="STRING" id="220668.lp_2126"/>
<dbReference type="EnsemblBacteria" id="CCC79360">
    <property type="protein sequence ID" value="CCC79360"/>
    <property type="gene ID" value="lp_2126"/>
</dbReference>
<dbReference type="GeneID" id="89669401"/>
<dbReference type="KEGG" id="lpl:lp_2126"/>
<dbReference type="PATRIC" id="fig|220668.9.peg.1801"/>
<dbReference type="eggNOG" id="COG0268">
    <property type="taxonomic scope" value="Bacteria"/>
</dbReference>
<dbReference type="HOGENOM" id="CLU_160655_1_1_9"/>
<dbReference type="OrthoDB" id="9808392at2"/>
<dbReference type="PhylomeDB" id="Q88VD4"/>
<dbReference type="Proteomes" id="UP000000432">
    <property type="component" value="Chromosome"/>
</dbReference>
<dbReference type="GO" id="GO:0005829">
    <property type="term" value="C:cytosol"/>
    <property type="evidence" value="ECO:0007669"/>
    <property type="project" value="TreeGrafter"/>
</dbReference>
<dbReference type="GO" id="GO:0015935">
    <property type="term" value="C:small ribosomal subunit"/>
    <property type="evidence" value="ECO:0007669"/>
    <property type="project" value="TreeGrafter"/>
</dbReference>
<dbReference type="GO" id="GO:0070181">
    <property type="term" value="F:small ribosomal subunit rRNA binding"/>
    <property type="evidence" value="ECO:0007669"/>
    <property type="project" value="TreeGrafter"/>
</dbReference>
<dbReference type="GO" id="GO:0003735">
    <property type="term" value="F:structural constituent of ribosome"/>
    <property type="evidence" value="ECO:0007669"/>
    <property type="project" value="InterPro"/>
</dbReference>
<dbReference type="GO" id="GO:0006412">
    <property type="term" value="P:translation"/>
    <property type="evidence" value="ECO:0007669"/>
    <property type="project" value="UniProtKB-UniRule"/>
</dbReference>
<dbReference type="Gene3D" id="1.20.58.110">
    <property type="entry name" value="Ribosomal protein S20"/>
    <property type="match status" value="1"/>
</dbReference>
<dbReference type="HAMAP" id="MF_00500">
    <property type="entry name" value="Ribosomal_bS20"/>
    <property type="match status" value="1"/>
</dbReference>
<dbReference type="InterPro" id="IPR002583">
    <property type="entry name" value="Ribosomal_bS20"/>
</dbReference>
<dbReference type="InterPro" id="IPR036510">
    <property type="entry name" value="Ribosomal_bS20_sf"/>
</dbReference>
<dbReference type="NCBIfam" id="TIGR00029">
    <property type="entry name" value="S20"/>
    <property type="match status" value="1"/>
</dbReference>
<dbReference type="PANTHER" id="PTHR33398">
    <property type="entry name" value="30S RIBOSOMAL PROTEIN S20"/>
    <property type="match status" value="1"/>
</dbReference>
<dbReference type="PANTHER" id="PTHR33398:SF1">
    <property type="entry name" value="SMALL RIBOSOMAL SUBUNIT PROTEIN BS20C"/>
    <property type="match status" value="1"/>
</dbReference>
<dbReference type="Pfam" id="PF01649">
    <property type="entry name" value="Ribosomal_S20p"/>
    <property type="match status" value="1"/>
</dbReference>
<dbReference type="SUPFAM" id="SSF46992">
    <property type="entry name" value="Ribosomal protein S20"/>
    <property type="match status" value="1"/>
</dbReference>
<sequence length="84" mass="9085">MPIIKSAIERVKTNNKANVRNTAQMSAMRTAVKKFEAAKTAGADNVDDLYLAATSAVDKAASKGLIKRNKAARDKSRMAARYAK</sequence>
<organism>
    <name type="scientific">Lactiplantibacillus plantarum (strain ATCC BAA-793 / NCIMB 8826 / WCFS1)</name>
    <name type="common">Lactobacillus plantarum</name>
    <dbReference type="NCBI Taxonomy" id="220668"/>
    <lineage>
        <taxon>Bacteria</taxon>
        <taxon>Bacillati</taxon>
        <taxon>Bacillota</taxon>
        <taxon>Bacilli</taxon>
        <taxon>Lactobacillales</taxon>
        <taxon>Lactobacillaceae</taxon>
        <taxon>Lactiplantibacillus</taxon>
    </lineage>
</organism>
<feature type="chain" id="PRO_0000224944" description="Small ribosomal subunit protein bS20">
    <location>
        <begin position="1"/>
        <end position="84"/>
    </location>
</feature>
<accession>Q88VD4</accession>
<accession>F9UQ71</accession>
<protein>
    <recommendedName>
        <fullName evidence="1">Small ribosomal subunit protein bS20</fullName>
    </recommendedName>
    <alternativeName>
        <fullName evidence="2">30S ribosomal protein S20</fullName>
    </alternativeName>
</protein>
<proteinExistence type="inferred from homology"/>
<gene>
    <name evidence="1" type="primary">rpsT</name>
    <name type="ordered locus">lp_2126</name>
</gene>
<reference key="1">
    <citation type="journal article" date="2003" name="Proc. Natl. Acad. Sci. U.S.A.">
        <title>Complete genome sequence of Lactobacillus plantarum WCFS1.</title>
        <authorList>
            <person name="Kleerebezem M."/>
            <person name="Boekhorst J."/>
            <person name="van Kranenburg R."/>
            <person name="Molenaar D."/>
            <person name="Kuipers O.P."/>
            <person name="Leer R."/>
            <person name="Tarchini R."/>
            <person name="Peters S.A."/>
            <person name="Sandbrink H.M."/>
            <person name="Fiers M.W.E.J."/>
            <person name="Stiekema W."/>
            <person name="Klein Lankhorst R.M."/>
            <person name="Bron P.A."/>
            <person name="Hoffer S.M."/>
            <person name="Nierop Groot M.N."/>
            <person name="Kerkhoven R."/>
            <person name="De Vries M."/>
            <person name="Ursing B."/>
            <person name="De Vos W.M."/>
            <person name="Siezen R.J."/>
        </authorList>
    </citation>
    <scope>NUCLEOTIDE SEQUENCE [LARGE SCALE GENOMIC DNA]</scope>
    <source>
        <strain>ATCC BAA-793 / NCIMB 8826 / WCFS1</strain>
    </source>
</reference>
<reference key="2">
    <citation type="journal article" date="2012" name="J. Bacteriol.">
        <title>Complete resequencing and reannotation of the Lactobacillus plantarum WCFS1 genome.</title>
        <authorList>
            <person name="Siezen R.J."/>
            <person name="Francke C."/>
            <person name="Renckens B."/>
            <person name="Boekhorst J."/>
            <person name="Wels M."/>
            <person name="Kleerebezem M."/>
            <person name="van Hijum S.A."/>
        </authorList>
    </citation>
    <scope>NUCLEOTIDE SEQUENCE [LARGE SCALE GENOMIC DNA]</scope>
    <scope>GENOME REANNOTATION</scope>
    <source>
        <strain>ATCC BAA-793 / NCIMB 8826 / WCFS1</strain>
    </source>
</reference>
<keyword id="KW-1185">Reference proteome</keyword>
<keyword id="KW-0687">Ribonucleoprotein</keyword>
<keyword id="KW-0689">Ribosomal protein</keyword>
<keyword id="KW-0694">RNA-binding</keyword>
<keyword id="KW-0699">rRNA-binding</keyword>
<evidence type="ECO:0000255" key="1">
    <source>
        <dbReference type="HAMAP-Rule" id="MF_00500"/>
    </source>
</evidence>
<evidence type="ECO:0000305" key="2"/>
<comment type="function">
    <text evidence="1">Binds directly to 16S ribosomal RNA.</text>
</comment>
<comment type="similarity">
    <text evidence="1">Belongs to the bacterial ribosomal protein bS20 family.</text>
</comment>